<dbReference type="EC" id="2.4.1.-" evidence="1"/>
<dbReference type="EMBL" id="CP000075">
    <property type="protein sequence ID" value="AAY35448.1"/>
    <property type="molecule type" value="Genomic_DNA"/>
</dbReference>
<dbReference type="RefSeq" id="YP_233486.1">
    <property type="nucleotide sequence ID" value="NC_007005.1"/>
</dbReference>
<dbReference type="STRING" id="205918.Psyr_0378"/>
<dbReference type="CAZy" id="GT2">
    <property type="family name" value="Glycosyltransferase Family 2"/>
</dbReference>
<dbReference type="KEGG" id="psb:Psyr_0378"/>
<dbReference type="PATRIC" id="fig|205918.7.peg.385"/>
<dbReference type="eggNOG" id="COG2943">
    <property type="taxonomic scope" value="Bacteria"/>
</dbReference>
<dbReference type="HOGENOM" id="CLU_015730_1_0_6"/>
<dbReference type="OrthoDB" id="9775281at2"/>
<dbReference type="UniPathway" id="UPA00637"/>
<dbReference type="Proteomes" id="UP000000426">
    <property type="component" value="Chromosome"/>
</dbReference>
<dbReference type="GO" id="GO:0005886">
    <property type="term" value="C:plasma membrane"/>
    <property type="evidence" value="ECO:0007669"/>
    <property type="project" value="UniProtKB-SubCell"/>
</dbReference>
<dbReference type="GO" id="GO:0016758">
    <property type="term" value="F:hexosyltransferase activity"/>
    <property type="evidence" value="ECO:0007669"/>
    <property type="project" value="UniProtKB-UniRule"/>
</dbReference>
<dbReference type="GO" id="GO:0009250">
    <property type="term" value="P:glucan biosynthetic process"/>
    <property type="evidence" value="ECO:0007669"/>
    <property type="project" value="UniProtKB-UniRule"/>
</dbReference>
<dbReference type="CDD" id="cd04191">
    <property type="entry name" value="Glucan_BSP_MdoH"/>
    <property type="match status" value="1"/>
</dbReference>
<dbReference type="FunFam" id="3.90.550.10:FF:000047">
    <property type="entry name" value="Glucans biosynthesis glucosyltransferase H"/>
    <property type="match status" value="1"/>
</dbReference>
<dbReference type="Gene3D" id="3.90.550.10">
    <property type="entry name" value="Spore Coat Polysaccharide Biosynthesis Protein SpsA, Chain A"/>
    <property type="match status" value="1"/>
</dbReference>
<dbReference type="HAMAP" id="MF_01072">
    <property type="entry name" value="MdoH_OpgH"/>
    <property type="match status" value="1"/>
</dbReference>
<dbReference type="InterPro" id="IPR023725">
    <property type="entry name" value="Glucans_biosynth_gluTrFase_H"/>
</dbReference>
<dbReference type="InterPro" id="IPR001173">
    <property type="entry name" value="Glyco_trans_2-like"/>
</dbReference>
<dbReference type="InterPro" id="IPR050321">
    <property type="entry name" value="Glycosyltr_2/OpgH_subfam"/>
</dbReference>
<dbReference type="InterPro" id="IPR029044">
    <property type="entry name" value="Nucleotide-diphossugar_trans"/>
</dbReference>
<dbReference type="NCBIfam" id="NF003955">
    <property type="entry name" value="PRK05454.1-1"/>
    <property type="match status" value="1"/>
</dbReference>
<dbReference type="NCBIfam" id="NF003958">
    <property type="entry name" value="PRK05454.2-1"/>
    <property type="match status" value="1"/>
</dbReference>
<dbReference type="NCBIfam" id="NF003962">
    <property type="entry name" value="PRK05454.2-5"/>
    <property type="match status" value="1"/>
</dbReference>
<dbReference type="PANTHER" id="PTHR43867">
    <property type="entry name" value="CELLULOSE SYNTHASE CATALYTIC SUBUNIT A [UDP-FORMING]"/>
    <property type="match status" value="1"/>
</dbReference>
<dbReference type="PANTHER" id="PTHR43867:SF5">
    <property type="entry name" value="GLUCANS BIOSYNTHESIS GLUCOSYLTRANSFERASE H"/>
    <property type="match status" value="1"/>
</dbReference>
<dbReference type="Pfam" id="PF00535">
    <property type="entry name" value="Glycos_transf_2"/>
    <property type="match status" value="1"/>
</dbReference>
<dbReference type="SUPFAM" id="SSF53448">
    <property type="entry name" value="Nucleotide-diphospho-sugar transferases"/>
    <property type="match status" value="1"/>
</dbReference>
<proteinExistence type="inferred from homology"/>
<keyword id="KW-0997">Cell inner membrane</keyword>
<keyword id="KW-1003">Cell membrane</keyword>
<keyword id="KW-0328">Glycosyltransferase</keyword>
<keyword id="KW-0472">Membrane</keyword>
<keyword id="KW-0808">Transferase</keyword>
<keyword id="KW-0812">Transmembrane</keyword>
<keyword id="KW-1133">Transmembrane helix</keyword>
<name>OPGH_PSEU2</name>
<feature type="chain" id="PRO_1000064613" description="Glucans biosynthesis glucosyltransferase H">
    <location>
        <begin position="1"/>
        <end position="860"/>
    </location>
</feature>
<feature type="transmembrane region" description="Helical" evidence="1">
    <location>
        <begin position="146"/>
        <end position="166"/>
    </location>
</feature>
<feature type="transmembrane region" description="Helical" evidence="1">
    <location>
        <begin position="200"/>
        <end position="220"/>
    </location>
</feature>
<feature type="transmembrane region" description="Helical" evidence="1">
    <location>
        <begin position="519"/>
        <end position="539"/>
    </location>
</feature>
<feature type="transmembrane region" description="Helical" evidence="1">
    <location>
        <begin position="576"/>
        <end position="596"/>
    </location>
</feature>
<feature type="transmembrane region" description="Helical" evidence="1">
    <location>
        <begin position="610"/>
        <end position="630"/>
    </location>
</feature>
<feature type="transmembrane region" description="Helical" evidence="1">
    <location>
        <begin position="686"/>
        <end position="706"/>
    </location>
</feature>
<accession>Q4ZZH4</accession>
<comment type="function">
    <text evidence="1">Involved in the biosynthesis of osmoregulated periplasmic glucans (OPGs).</text>
</comment>
<comment type="pathway">
    <text evidence="1">Glycan metabolism; osmoregulated periplasmic glucan (OPG) biosynthesis.</text>
</comment>
<comment type="subcellular location">
    <subcellularLocation>
        <location evidence="1">Cell inner membrane</location>
        <topology evidence="1">Multi-pass membrane protein</topology>
    </subcellularLocation>
</comment>
<comment type="similarity">
    <text evidence="1">Belongs to the glycosyltransferase 2 family. OpgH subfamily.</text>
</comment>
<gene>
    <name evidence="1" type="primary">opgH</name>
    <name type="ordered locus">Psyr_0378</name>
</gene>
<organism>
    <name type="scientific">Pseudomonas syringae pv. syringae (strain B728a)</name>
    <dbReference type="NCBI Taxonomy" id="205918"/>
    <lineage>
        <taxon>Bacteria</taxon>
        <taxon>Pseudomonadati</taxon>
        <taxon>Pseudomonadota</taxon>
        <taxon>Gammaproteobacteria</taxon>
        <taxon>Pseudomonadales</taxon>
        <taxon>Pseudomonadaceae</taxon>
        <taxon>Pseudomonas</taxon>
        <taxon>Pseudomonas syringae</taxon>
    </lineage>
</organism>
<protein>
    <recommendedName>
        <fullName evidence="1">Glucans biosynthesis glucosyltransferase H</fullName>
        <ecNumber evidence="1">2.4.1.-</ecNumber>
    </recommendedName>
</protein>
<reference key="1">
    <citation type="journal article" date="2005" name="Proc. Natl. Acad. Sci. U.S.A.">
        <title>Comparison of the complete genome sequences of Pseudomonas syringae pv. syringae B728a and pv. tomato DC3000.</title>
        <authorList>
            <person name="Feil H."/>
            <person name="Feil W.S."/>
            <person name="Chain P."/>
            <person name="Larimer F."/>
            <person name="Dibartolo G."/>
            <person name="Copeland A."/>
            <person name="Lykidis A."/>
            <person name="Trong S."/>
            <person name="Nolan M."/>
            <person name="Goltsman E."/>
            <person name="Thiel J."/>
            <person name="Malfatti S."/>
            <person name="Loper J.E."/>
            <person name="Lapidus A."/>
            <person name="Detter J.C."/>
            <person name="Land M."/>
            <person name="Richardson P.M."/>
            <person name="Kyrpides N.C."/>
            <person name="Ivanova N."/>
            <person name="Lindow S.E."/>
        </authorList>
    </citation>
    <scope>NUCLEOTIDE SEQUENCE [LARGE SCALE GENOMIC DNA]</scope>
    <source>
        <strain>B728a</strain>
    </source>
</reference>
<evidence type="ECO:0000255" key="1">
    <source>
        <dbReference type="HAMAP-Rule" id="MF_01072"/>
    </source>
</evidence>
<sequence>MSNSLPVPMSLNEYLAHLPMSDEQRAELAGCTTFAELHERLSAQPVTDPAEAAQASVGRRLTLTTADQLEDAEMLGVDASGRLCLKATPPIRRTKVVPEPWRTNILVRGWRRLTGKGNPPKPEHDDLPRDLPKARWRTVGSIRRYILLILMLGQTIVAGWYMKGILPYQGWSLVSLDEITRQTFVQTALQVMPYALQTSILLLFGILFCWVSAGFWTALMGFLELLTGRDKYRISGASAGNEPIEKGARTALVMPICNEDVPRVFAGLRATFESVAATGDLDRFDFFVLSDTNETDIAVAEQQAWLDVCRETKGFGKIFYRRRRRRVKRKSGNLDDFCRRWGGDYRYMVVLDADSVMSGECLTSLVRLMEATPDAGIIQTAPRASGMDTLYARMQQFATRVYGPLFTAGLHFWQLGESHYWGHNAIIRMKPFIEHCALAPLPGKGAFAGAILSHDFVEAALMRRAGWGVWIAYDLPGSYEELPPNLLDELKRDRRWCHGNLMNFRLFLVKGMHPVHRAVFLTGVMSYLSAPLWFFFLVLSTALLAVNTLMEPTYFLEPRQLYPLWPQWHPEKAVALFSTTIVLLFLPKLLSVILIWAKGAKGFGGKFKVTVSMLLEMLFSVLLAPVRMLFHTRFVLAAFLGWAATWNSPQRDDDSTPWIEAVKRHGPQTLLGACWALLVFWLNPSFLWWLAPIVVSLMLSIPVSVISSRTNLGVKARDEKFFLIPEEFEPPQELISTDRYTYENRWHALKQGFIRAVVDPRQNALACALATSRHRQAQPIEVVRMERVDQALKVGPAKLGNQERLMLLSDPVALGRLHERVWSEGHEEWLAAWRASIEADPHAPLLPLQPEGKASEPVPV</sequence>